<accession>A4W6N8</accession>
<protein>
    <recommendedName>
        <fullName evidence="1">3-methyl-2-oxobutanoate hydroxymethyltransferase</fullName>
        <ecNumber evidence="1">2.1.2.11</ecNumber>
    </recommendedName>
    <alternativeName>
        <fullName evidence="1">Ketopantoate hydroxymethyltransferase</fullName>
        <shortName evidence="1">KPHMT</shortName>
    </alternativeName>
</protein>
<keyword id="KW-0963">Cytoplasm</keyword>
<keyword id="KW-0460">Magnesium</keyword>
<keyword id="KW-0479">Metal-binding</keyword>
<keyword id="KW-0566">Pantothenate biosynthesis</keyword>
<keyword id="KW-0808">Transferase</keyword>
<comment type="function">
    <text evidence="1">Catalyzes the reversible reaction in which hydroxymethyl group from 5,10-methylenetetrahydrofolate is transferred onto alpha-ketoisovalerate to form ketopantoate.</text>
</comment>
<comment type="catalytic activity">
    <reaction evidence="1">
        <text>3-methyl-2-oxobutanoate + (6R)-5,10-methylene-5,6,7,8-tetrahydrofolate + H2O = 2-dehydropantoate + (6S)-5,6,7,8-tetrahydrofolate</text>
        <dbReference type="Rhea" id="RHEA:11824"/>
        <dbReference type="ChEBI" id="CHEBI:11561"/>
        <dbReference type="ChEBI" id="CHEBI:11851"/>
        <dbReference type="ChEBI" id="CHEBI:15377"/>
        <dbReference type="ChEBI" id="CHEBI:15636"/>
        <dbReference type="ChEBI" id="CHEBI:57453"/>
        <dbReference type="EC" id="2.1.2.11"/>
    </reaction>
</comment>
<comment type="cofactor">
    <cofactor evidence="1">
        <name>Mg(2+)</name>
        <dbReference type="ChEBI" id="CHEBI:18420"/>
    </cofactor>
    <text evidence="1">Binds 1 Mg(2+) ion per subunit.</text>
</comment>
<comment type="pathway">
    <text evidence="1">Cofactor biosynthesis; (R)-pantothenate biosynthesis; (R)-pantoate from 3-methyl-2-oxobutanoate: step 1/2.</text>
</comment>
<comment type="subunit">
    <text evidence="1">Homodecamer; pentamer of dimers.</text>
</comment>
<comment type="subcellular location">
    <subcellularLocation>
        <location evidence="1">Cytoplasm</location>
    </subcellularLocation>
</comment>
<comment type="similarity">
    <text evidence="1">Belongs to the PanB family.</text>
</comment>
<feature type="chain" id="PRO_1000058184" description="3-methyl-2-oxobutanoate hydroxymethyltransferase">
    <location>
        <begin position="1"/>
        <end position="263"/>
    </location>
</feature>
<feature type="active site" description="Proton acceptor" evidence="1">
    <location>
        <position position="180"/>
    </location>
</feature>
<feature type="binding site" evidence="1">
    <location>
        <begin position="45"/>
        <end position="46"/>
    </location>
    <ligand>
        <name>3-methyl-2-oxobutanoate</name>
        <dbReference type="ChEBI" id="CHEBI:11851"/>
    </ligand>
</feature>
<feature type="binding site" evidence="1">
    <location>
        <position position="45"/>
    </location>
    <ligand>
        <name>Mg(2+)</name>
        <dbReference type="ChEBI" id="CHEBI:18420"/>
    </ligand>
</feature>
<feature type="binding site" evidence="1">
    <location>
        <position position="84"/>
    </location>
    <ligand>
        <name>3-methyl-2-oxobutanoate</name>
        <dbReference type="ChEBI" id="CHEBI:11851"/>
    </ligand>
</feature>
<feature type="binding site" evidence="1">
    <location>
        <position position="84"/>
    </location>
    <ligand>
        <name>Mg(2+)</name>
        <dbReference type="ChEBI" id="CHEBI:18420"/>
    </ligand>
</feature>
<feature type="binding site" evidence="1">
    <location>
        <position position="112"/>
    </location>
    <ligand>
        <name>3-methyl-2-oxobutanoate</name>
        <dbReference type="ChEBI" id="CHEBI:11851"/>
    </ligand>
</feature>
<feature type="binding site" evidence="1">
    <location>
        <position position="114"/>
    </location>
    <ligand>
        <name>Mg(2+)</name>
        <dbReference type="ChEBI" id="CHEBI:18420"/>
    </ligand>
</feature>
<name>PANB_ENT38</name>
<sequence length="263" mass="28140">MKPTTISLLQKCKQEKKRFATITAYDFSFAKLFAEEGINVMLVGDSLGMTVQGHDSTLPVTVDDIAYHTRAVRRGAPHCLLLSDLPFMAYATPEQAFENAAAVMRAGANMVKIEGGAWLVDTVKMLTERAVPVCGHLGLTPQSVNVFGGYKVQGRGDAGQILLDDALALEAAGIQLLVLECVPVELAKRVTDALTIPVIGIGAGNVTDGQILVMHDAFGITGGHIPKFAKNFLSEAGDMRAAVRQYIADVESGVYPGEEHSFH</sequence>
<reference key="1">
    <citation type="journal article" date="2010" name="PLoS Genet.">
        <title>Genome sequence of the plant growth promoting endophytic bacterium Enterobacter sp. 638.</title>
        <authorList>
            <person name="Taghavi S."/>
            <person name="van der Lelie D."/>
            <person name="Hoffman A."/>
            <person name="Zhang Y.B."/>
            <person name="Walla M.D."/>
            <person name="Vangronsveld J."/>
            <person name="Newman L."/>
            <person name="Monchy S."/>
        </authorList>
    </citation>
    <scope>NUCLEOTIDE SEQUENCE [LARGE SCALE GENOMIC DNA]</scope>
    <source>
        <strain>638</strain>
    </source>
</reference>
<proteinExistence type="inferred from homology"/>
<organism>
    <name type="scientific">Enterobacter sp. (strain 638)</name>
    <dbReference type="NCBI Taxonomy" id="399742"/>
    <lineage>
        <taxon>Bacteria</taxon>
        <taxon>Pseudomonadati</taxon>
        <taxon>Pseudomonadota</taxon>
        <taxon>Gammaproteobacteria</taxon>
        <taxon>Enterobacterales</taxon>
        <taxon>Enterobacteriaceae</taxon>
        <taxon>Enterobacter</taxon>
    </lineage>
</organism>
<dbReference type="EC" id="2.1.2.11" evidence="1"/>
<dbReference type="EMBL" id="CP000653">
    <property type="protein sequence ID" value="ABP59368.1"/>
    <property type="molecule type" value="Genomic_DNA"/>
</dbReference>
<dbReference type="RefSeq" id="WP_012016089.1">
    <property type="nucleotide sequence ID" value="NC_009436.1"/>
</dbReference>
<dbReference type="SMR" id="A4W6N8"/>
<dbReference type="STRING" id="399742.Ent638_0681"/>
<dbReference type="KEGG" id="ent:Ent638_0681"/>
<dbReference type="eggNOG" id="COG0413">
    <property type="taxonomic scope" value="Bacteria"/>
</dbReference>
<dbReference type="HOGENOM" id="CLU_036645_1_0_6"/>
<dbReference type="OrthoDB" id="9781789at2"/>
<dbReference type="UniPathway" id="UPA00028">
    <property type="reaction ID" value="UER00003"/>
</dbReference>
<dbReference type="Proteomes" id="UP000000230">
    <property type="component" value="Chromosome"/>
</dbReference>
<dbReference type="GO" id="GO:0005737">
    <property type="term" value="C:cytoplasm"/>
    <property type="evidence" value="ECO:0007669"/>
    <property type="project" value="UniProtKB-SubCell"/>
</dbReference>
<dbReference type="GO" id="GO:0003864">
    <property type="term" value="F:3-methyl-2-oxobutanoate hydroxymethyltransferase activity"/>
    <property type="evidence" value="ECO:0007669"/>
    <property type="project" value="UniProtKB-UniRule"/>
</dbReference>
<dbReference type="GO" id="GO:0000287">
    <property type="term" value="F:magnesium ion binding"/>
    <property type="evidence" value="ECO:0007669"/>
    <property type="project" value="TreeGrafter"/>
</dbReference>
<dbReference type="GO" id="GO:0015940">
    <property type="term" value="P:pantothenate biosynthetic process"/>
    <property type="evidence" value="ECO:0007669"/>
    <property type="project" value="UniProtKB-UniRule"/>
</dbReference>
<dbReference type="CDD" id="cd06557">
    <property type="entry name" value="KPHMT-like"/>
    <property type="match status" value="1"/>
</dbReference>
<dbReference type="FunFam" id="3.20.20.60:FF:000003">
    <property type="entry name" value="3-methyl-2-oxobutanoate hydroxymethyltransferase"/>
    <property type="match status" value="1"/>
</dbReference>
<dbReference type="Gene3D" id="3.20.20.60">
    <property type="entry name" value="Phosphoenolpyruvate-binding domains"/>
    <property type="match status" value="1"/>
</dbReference>
<dbReference type="HAMAP" id="MF_00156">
    <property type="entry name" value="PanB"/>
    <property type="match status" value="1"/>
</dbReference>
<dbReference type="InterPro" id="IPR003700">
    <property type="entry name" value="Pantoate_hydroxy_MeTrfase"/>
</dbReference>
<dbReference type="InterPro" id="IPR015813">
    <property type="entry name" value="Pyrv/PenolPyrv_kinase-like_dom"/>
</dbReference>
<dbReference type="InterPro" id="IPR040442">
    <property type="entry name" value="Pyrv_kinase-like_dom_sf"/>
</dbReference>
<dbReference type="NCBIfam" id="TIGR00222">
    <property type="entry name" value="panB"/>
    <property type="match status" value="1"/>
</dbReference>
<dbReference type="NCBIfam" id="NF001452">
    <property type="entry name" value="PRK00311.1"/>
    <property type="match status" value="1"/>
</dbReference>
<dbReference type="PANTHER" id="PTHR20881">
    <property type="entry name" value="3-METHYL-2-OXOBUTANOATE HYDROXYMETHYLTRANSFERASE"/>
    <property type="match status" value="1"/>
</dbReference>
<dbReference type="PANTHER" id="PTHR20881:SF0">
    <property type="entry name" value="3-METHYL-2-OXOBUTANOATE HYDROXYMETHYLTRANSFERASE"/>
    <property type="match status" value="1"/>
</dbReference>
<dbReference type="Pfam" id="PF02548">
    <property type="entry name" value="Pantoate_transf"/>
    <property type="match status" value="1"/>
</dbReference>
<dbReference type="PIRSF" id="PIRSF000388">
    <property type="entry name" value="Pantoate_hydroxy_MeTrfase"/>
    <property type="match status" value="1"/>
</dbReference>
<dbReference type="SUPFAM" id="SSF51621">
    <property type="entry name" value="Phosphoenolpyruvate/pyruvate domain"/>
    <property type="match status" value="1"/>
</dbReference>
<gene>
    <name evidence="1" type="primary">panB</name>
    <name type="ordered locus">Ent638_0681</name>
</gene>
<evidence type="ECO:0000255" key="1">
    <source>
        <dbReference type="HAMAP-Rule" id="MF_00156"/>
    </source>
</evidence>